<sequence>MGLKYIKKAPNYTEIVLKAKIFSTLILMIVILFLINKMPSTYKKAYAVVLNNQIVGYVKDKTEAQNLLTQIKKEVEERHNTDSFILQSKLQLKSIEPGQYRETRVDELKNTIIEKGKVLVKRYAIFVNSKPYFVFENPQTPNNILNKLKKVYYNDKASQAKFLEKVEIKPVYVSPAIKVADEATALTKIMFGKDQVIEYTVKEGDTLWD</sequence>
<protein>
    <recommendedName>
        <fullName>Uncharacterized protein in xynC 3'region</fullName>
    </recommendedName>
    <alternativeName>
        <fullName>ORF 6</fullName>
    </alternativeName>
</protein>
<dbReference type="EMBL" id="M34459">
    <property type="protein sequence ID" value="AAA23064.1"/>
    <property type="molecule type" value="Genomic_DNA"/>
</dbReference>
<name>YXYC_CALSA</name>
<reference key="1">
    <citation type="journal article" date="1990" name="Appl. Environ. Microbiol.">
        <title>Cloning, sequence analysis, and expression of genes encoding xylan-degrading enzymes from the thermophile 'Caldocellum saccharolyticum'.</title>
        <authorList>
            <person name="Luethi E."/>
            <person name="Love D.R."/>
            <person name="McAnulty J."/>
            <person name="Wallace C."/>
            <person name="Caughey P.A."/>
            <person name="Saul D.J."/>
            <person name="Bergquist P.L."/>
        </authorList>
    </citation>
    <scope>NUCLEOTIDE SEQUENCE [GENOMIC DNA]</scope>
</reference>
<feature type="chain" id="PRO_0000066551" description="Uncharacterized protein in xynC 3'region">
    <location>
        <begin position="1"/>
        <end position="209" status="greater than"/>
    </location>
</feature>
<feature type="non-terminal residue">
    <location>
        <position position="209"/>
    </location>
</feature>
<proteinExistence type="predicted"/>
<organism>
    <name type="scientific">Caldicellulosiruptor saccharolyticus</name>
    <name type="common">Caldocellum saccharolyticum</name>
    <dbReference type="NCBI Taxonomy" id="44001"/>
    <lineage>
        <taxon>Bacteria</taxon>
        <taxon>Bacillati</taxon>
        <taxon>Bacillota</taxon>
        <taxon>Bacillota incertae sedis</taxon>
        <taxon>Caldicellulosiruptorales</taxon>
        <taxon>Caldicellulosiruptoraceae</taxon>
        <taxon>Caldicellulosiruptor</taxon>
    </lineage>
</organism>
<accession>P23555</accession>